<sequence>MTRFARIIGTGSYLPPKRVTNDELAAQLAEKGIETSDEWIVSRSGIRARHFAEPDVTCSDLAVRAAERAIEAAGIDRSELDLILVATSTPDFVFPSTACLVQQKLGITNGCAAFDVQAVCSGFVYALATADKFIRSGAYRNVLVIGSEVFSRIIDFSDRTTCVLFGDGAGAVVLQASDEPGILSTALHADGSHANILCVPGNVAAGAIQGSAFLYMDGQAVFKLAVTVLDKVAREALAAAELDASQVDWLIPHQANIRIMQGTTKKLGLSNERLIVTVDEHGNTSAASIPLALDVAVRDGRIQRGQHVMLEGVGGGFTWGAALLRF</sequence>
<comment type="function">
    <text evidence="1">Catalyzes the condensation reaction of fatty acid synthesis by the addition to an acyl acceptor of two carbons from malonyl-ACP. Catalyzes the first condensation reaction which initiates fatty acid synthesis and may therefore play a role in governing the total rate of fatty acid production. Possesses both acetoacetyl-ACP synthase and acetyl transacylase activities. Its substrate specificity determines the biosynthesis of branched-chain and/or straight-chain of fatty acids.</text>
</comment>
<comment type="catalytic activity">
    <reaction evidence="1">
        <text>malonyl-[ACP] + acetyl-CoA + H(+) = 3-oxobutanoyl-[ACP] + CO2 + CoA</text>
        <dbReference type="Rhea" id="RHEA:12080"/>
        <dbReference type="Rhea" id="RHEA-COMP:9623"/>
        <dbReference type="Rhea" id="RHEA-COMP:9625"/>
        <dbReference type="ChEBI" id="CHEBI:15378"/>
        <dbReference type="ChEBI" id="CHEBI:16526"/>
        <dbReference type="ChEBI" id="CHEBI:57287"/>
        <dbReference type="ChEBI" id="CHEBI:57288"/>
        <dbReference type="ChEBI" id="CHEBI:78449"/>
        <dbReference type="ChEBI" id="CHEBI:78450"/>
        <dbReference type="EC" id="2.3.1.180"/>
    </reaction>
</comment>
<comment type="pathway">
    <text evidence="1">Lipid metabolism; fatty acid biosynthesis.</text>
</comment>
<comment type="subunit">
    <text evidence="1">Homodimer.</text>
</comment>
<comment type="subcellular location">
    <subcellularLocation>
        <location evidence="1">Cytoplasm</location>
    </subcellularLocation>
</comment>
<comment type="domain">
    <text evidence="1">The last Arg residue of the ACP-binding site is essential for the weak association between ACP/AcpP and FabH.</text>
</comment>
<comment type="similarity">
    <text evidence="1">Belongs to the thiolase-like superfamily. FabH family.</text>
</comment>
<reference key="1">
    <citation type="submission" date="2008-05" db="EMBL/GenBank/DDBJ databases">
        <title>Complete sequence of chromosome 1 of Ralstonia pickettii 12J.</title>
        <authorList>
            <person name="Lucas S."/>
            <person name="Copeland A."/>
            <person name="Lapidus A."/>
            <person name="Glavina del Rio T."/>
            <person name="Dalin E."/>
            <person name="Tice H."/>
            <person name="Bruce D."/>
            <person name="Goodwin L."/>
            <person name="Pitluck S."/>
            <person name="Meincke L."/>
            <person name="Brettin T."/>
            <person name="Detter J.C."/>
            <person name="Han C."/>
            <person name="Kuske C.R."/>
            <person name="Schmutz J."/>
            <person name="Larimer F."/>
            <person name="Land M."/>
            <person name="Hauser L."/>
            <person name="Kyrpides N."/>
            <person name="Mikhailova N."/>
            <person name="Marsh T."/>
            <person name="Richardson P."/>
        </authorList>
    </citation>
    <scope>NUCLEOTIDE SEQUENCE [LARGE SCALE GENOMIC DNA]</scope>
    <source>
        <strain>12J</strain>
    </source>
</reference>
<protein>
    <recommendedName>
        <fullName evidence="1">Beta-ketoacyl-[acyl-carrier-protein] synthase III</fullName>
        <shortName evidence="1">Beta-ketoacyl-ACP synthase III</shortName>
        <shortName evidence="1">KAS III</shortName>
        <ecNumber evidence="1">2.3.1.180</ecNumber>
    </recommendedName>
    <alternativeName>
        <fullName evidence="1">3-oxoacyl-[acyl-carrier-protein] synthase 3</fullName>
    </alternativeName>
    <alternativeName>
        <fullName evidence="1">3-oxoacyl-[acyl-carrier-protein] synthase III</fullName>
    </alternativeName>
</protein>
<proteinExistence type="inferred from homology"/>
<organism>
    <name type="scientific">Ralstonia pickettii (strain 12J)</name>
    <dbReference type="NCBI Taxonomy" id="402626"/>
    <lineage>
        <taxon>Bacteria</taxon>
        <taxon>Pseudomonadati</taxon>
        <taxon>Pseudomonadota</taxon>
        <taxon>Betaproteobacteria</taxon>
        <taxon>Burkholderiales</taxon>
        <taxon>Burkholderiaceae</taxon>
        <taxon>Ralstonia</taxon>
    </lineage>
</organism>
<name>FABH_RALPJ</name>
<feature type="chain" id="PRO_1000187890" description="Beta-ketoacyl-[acyl-carrier-protein] synthase III">
    <location>
        <begin position="1"/>
        <end position="326"/>
    </location>
</feature>
<feature type="region of interest" description="ACP-binding" evidence="1">
    <location>
        <begin position="254"/>
        <end position="258"/>
    </location>
</feature>
<feature type="active site" evidence="1">
    <location>
        <position position="120"/>
    </location>
</feature>
<feature type="active site" evidence="1">
    <location>
        <position position="253"/>
    </location>
</feature>
<feature type="active site" evidence="1">
    <location>
        <position position="283"/>
    </location>
</feature>
<gene>
    <name evidence="1" type="primary">fabH</name>
    <name type="ordered locus">Rpic_0915</name>
</gene>
<keyword id="KW-0012">Acyltransferase</keyword>
<keyword id="KW-0963">Cytoplasm</keyword>
<keyword id="KW-0275">Fatty acid biosynthesis</keyword>
<keyword id="KW-0276">Fatty acid metabolism</keyword>
<keyword id="KW-0444">Lipid biosynthesis</keyword>
<keyword id="KW-0443">Lipid metabolism</keyword>
<keyword id="KW-0511">Multifunctional enzyme</keyword>
<keyword id="KW-0808">Transferase</keyword>
<accession>B2U968</accession>
<evidence type="ECO:0000255" key="1">
    <source>
        <dbReference type="HAMAP-Rule" id="MF_01815"/>
    </source>
</evidence>
<dbReference type="EC" id="2.3.1.180" evidence="1"/>
<dbReference type="EMBL" id="CP001068">
    <property type="protein sequence ID" value="ACD26065.1"/>
    <property type="molecule type" value="Genomic_DNA"/>
</dbReference>
<dbReference type="SMR" id="B2U968"/>
<dbReference type="STRING" id="402626.Rpic_0915"/>
<dbReference type="KEGG" id="rpi:Rpic_0915"/>
<dbReference type="eggNOG" id="COG0332">
    <property type="taxonomic scope" value="Bacteria"/>
</dbReference>
<dbReference type="HOGENOM" id="CLU_039592_4_1_4"/>
<dbReference type="UniPathway" id="UPA00094"/>
<dbReference type="GO" id="GO:0005737">
    <property type="term" value="C:cytoplasm"/>
    <property type="evidence" value="ECO:0007669"/>
    <property type="project" value="UniProtKB-SubCell"/>
</dbReference>
<dbReference type="GO" id="GO:0004315">
    <property type="term" value="F:3-oxoacyl-[acyl-carrier-protein] synthase activity"/>
    <property type="evidence" value="ECO:0007669"/>
    <property type="project" value="InterPro"/>
</dbReference>
<dbReference type="GO" id="GO:0033818">
    <property type="term" value="F:beta-ketoacyl-acyl-carrier-protein synthase III activity"/>
    <property type="evidence" value="ECO:0007669"/>
    <property type="project" value="UniProtKB-UniRule"/>
</dbReference>
<dbReference type="GO" id="GO:0006633">
    <property type="term" value="P:fatty acid biosynthetic process"/>
    <property type="evidence" value="ECO:0007669"/>
    <property type="project" value="UniProtKB-UniRule"/>
</dbReference>
<dbReference type="CDD" id="cd00830">
    <property type="entry name" value="KAS_III"/>
    <property type="match status" value="1"/>
</dbReference>
<dbReference type="FunFam" id="3.40.47.10:FF:000004">
    <property type="entry name" value="3-oxoacyl-[acyl-carrier-protein] synthase 3"/>
    <property type="match status" value="1"/>
</dbReference>
<dbReference type="Gene3D" id="3.40.47.10">
    <property type="match status" value="1"/>
</dbReference>
<dbReference type="HAMAP" id="MF_01815">
    <property type="entry name" value="FabH"/>
    <property type="match status" value="1"/>
</dbReference>
<dbReference type="InterPro" id="IPR013747">
    <property type="entry name" value="ACP_syn_III_C"/>
</dbReference>
<dbReference type="InterPro" id="IPR013751">
    <property type="entry name" value="ACP_syn_III_N"/>
</dbReference>
<dbReference type="InterPro" id="IPR004655">
    <property type="entry name" value="FabH"/>
</dbReference>
<dbReference type="InterPro" id="IPR016039">
    <property type="entry name" value="Thiolase-like"/>
</dbReference>
<dbReference type="NCBIfam" id="TIGR00747">
    <property type="entry name" value="fabH"/>
    <property type="match status" value="1"/>
</dbReference>
<dbReference type="NCBIfam" id="NF006829">
    <property type="entry name" value="PRK09352.1"/>
    <property type="match status" value="1"/>
</dbReference>
<dbReference type="PANTHER" id="PTHR43091">
    <property type="entry name" value="3-OXOACYL-[ACYL-CARRIER-PROTEIN] SYNTHASE"/>
    <property type="match status" value="1"/>
</dbReference>
<dbReference type="PANTHER" id="PTHR43091:SF1">
    <property type="entry name" value="BETA-KETOACYL-[ACYL-CARRIER-PROTEIN] SYNTHASE III, CHLOROPLASTIC"/>
    <property type="match status" value="1"/>
</dbReference>
<dbReference type="Pfam" id="PF08545">
    <property type="entry name" value="ACP_syn_III"/>
    <property type="match status" value="1"/>
</dbReference>
<dbReference type="Pfam" id="PF08541">
    <property type="entry name" value="ACP_syn_III_C"/>
    <property type="match status" value="1"/>
</dbReference>
<dbReference type="SUPFAM" id="SSF53901">
    <property type="entry name" value="Thiolase-like"/>
    <property type="match status" value="1"/>
</dbReference>